<dbReference type="EC" id="4.1.1.39" evidence="1"/>
<dbReference type="EMBL" id="Z37418">
    <property type="protein sequence ID" value="CAA85668.1"/>
    <property type="molecule type" value="Genomic_DNA"/>
</dbReference>
<dbReference type="SMR" id="Q33619"/>
<dbReference type="GO" id="GO:0009507">
    <property type="term" value="C:chloroplast"/>
    <property type="evidence" value="ECO:0007669"/>
    <property type="project" value="UniProtKB-SubCell"/>
</dbReference>
<dbReference type="GO" id="GO:0000287">
    <property type="term" value="F:magnesium ion binding"/>
    <property type="evidence" value="ECO:0007669"/>
    <property type="project" value="InterPro"/>
</dbReference>
<dbReference type="GO" id="GO:0004497">
    <property type="term" value="F:monooxygenase activity"/>
    <property type="evidence" value="ECO:0007669"/>
    <property type="project" value="UniProtKB-KW"/>
</dbReference>
<dbReference type="GO" id="GO:0016984">
    <property type="term" value="F:ribulose-bisphosphate carboxylase activity"/>
    <property type="evidence" value="ECO:0007669"/>
    <property type="project" value="UniProtKB-EC"/>
</dbReference>
<dbReference type="GO" id="GO:0009853">
    <property type="term" value="P:photorespiration"/>
    <property type="evidence" value="ECO:0007669"/>
    <property type="project" value="UniProtKB-KW"/>
</dbReference>
<dbReference type="GO" id="GO:0019253">
    <property type="term" value="P:reductive pentose-phosphate cycle"/>
    <property type="evidence" value="ECO:0007669"/>
    <property type="project" value="UniProtKB-KW"/>
</dbReference>
<dbReference type="CDD" id="cd08212">
    <property type="entry name" value="RuBisCO_large_I"/>
    <property type="match status" value="1"/>
</dbReference>
<dbReference type="FunFam" id="3.20.20.110:FF:000001">
    <property type="entry name" value="Ribulose bisphosphate carboxylase large chain"/>
    <property type="match status" value="1"/>
</dbReference>
<dbReference type="FunFam" id="3.30.70.150:FF:000001">
    <property type="entry name" value="Ribulose bisphosphate carboxylase large chain"/>
    <property type="match status" value="1"/>
</dbReference>
<dbReference type="Gene3D" id="3.20.20.110">
    <property type="entry name" value="Ribulose bisphosphate carboxylase, large subunit, C-terminal domain"/>
    <property type="match status" value="1"/>
</dbReference>
<dbReference type="Gene3D" id="3.30.70.150">
    <property type="entry name" value="RuBisCO large subunit, N-terminal domain"/>
    <property type="match status" value="1"/>
</dbReference>
<dbReference type="HAMAP" id="MF_01338">
    <property type="entry name" value="RuBisCO_L_type1"/>
    <property type="match status" value="1"/>
</dbReference>
<dbReference type="InterPro" id="IPR033966">
    <property type="entry name" value="RuBisCO"/>
</dbReference>
<dbReference type="InterPro" id="IPR020878">
    <property type="entry name" value="RuBisCo_large_chain_AS"/>
</dbReference>
<dbReference type="InterPro" id="IPR000685">
    <property type="entry name" value="RuBisCO_lsu_C"/>
</dbReference>
<dbReference type="InterPro" id="IPR036376">
    <property type="entry name" value="RuBisCO_lsu_C_sf"/>
</dbReference>
<dbReference type="InterPro" id="IPR017443">
    <property type="entry name" value="RuBisCO_lsu_fd_N"/>
</dbReference>
<dbReference type="InterPro" id="IPR036422">
    <property type="entry name" value="RuBisCO_lsu_N_sf"/>
</dbReference>
<dbReference type="InterPro" id="IPR020888">
    <property type="entry name" value="RuBisCO_lsuI"/>
</dbReference>
<dbReference type="NCBIfam" id="NF003252">
    <property type="entry name" value="PRK04208.1"/>
    <property type="match status" value="1"/>
</dbReference>
<dbReference type="PANTHER" id="PTHR42704">
    <property type="entry name" value="RIBULOSE BISPHOSPHATE CARBOXYLASE"/>
    <property type="match status" value="1"/>
</dbReference>
<dbReference type="PANTHER" id="PTHR42704:SF15">
    <property type="entry name" value="RIBULOSE BISPHOSPHATE CARBOXYLASE LARGE CHAIN"/>
    <property type="match status" value="1"/>
</dbReference>
<dbReference type="Pfam" id="PF00016">
    <property type="entry name" value="RuBisCO_large"/>
    <property type="match status" value="1"/>
</dbReference>
<dbReference type="Pfam" id="PF02788">
    <property type="entry name" value="RuBisCO_large_N"/>
    <property type="match status" value="1"/>
</dbReference>
<dbReference type="SFLD" id="SFLDG01052">
    <property type="entry name" value="RuBisCO"/>
    <property type="match status" value="1"/>
</dbReference>
<dbReference type="SFLD" id="SFLDS00014">
    <property type="entry name" value="RuBisCO"/>
    <property type="match status" value="1"/>
</dbReference>
<dbReference type="SFLD" id="SFLDG00301">
    <property type="entry name" value="RuBisCO-like_proteins"/>
    <property type="match status" value="1"/>
</dbReference>
<dbReference type="SUPFAM" id="SSF51649">
    <property type="entry name" value="RuBisCo, C-terminal domain"/>
    <property type="match status" value="1"/>
</dbReference>
<dbReference type="SUPFAM" id="SSF54966">
    <property type="entry name" value="RuBisCO, large subunit, small (N-terminal) domain"/>
    <property type="match status" value="1"/>
</dbReference>
<dbReference type="PROSITE" id="PS00157">
    <property type="entry name" value="RUBISCO_LARGE"/>
    <property type="match status" value="1"/>
</dbReference>
<feature type="propeptide" id="PRO_0000031311" evidence="1">
    <location>
        <begin position="1"/>
        <end position="2"/>
    </location>
</feature>
<feature type="chain" id="PRO_0000031312" description="Ribulose bisphosphate carboxylase large chain">
    <location>
        <begin position="3"/>
        <end position="473" status="greater than"/>
    </location>
</feature>
<feature type="active site" description="Proton acceptor" evidence="1">
    <location>
        <position position="175"/>
    </location>
</feature>
<feature type="active site" description="Proton acceptor" evidence="1">
    <location>
        <position position="294"/>
    </location>
</feature>
<feature type="binding site" description="in homodimeric partner" evidence="1">
    <location>
        <position position="123"/>
    </location>
    <ligand>
        <name>substrate</name>
    </ligand>
</feature>
<feature type="binding site" evidence="1">
    <location>
        <position position="173"/>
    </location>
    <ligand>
        <name>substrate</name>
    </ligand>
</feature>
<feature type="binding site" evidence="1">
    <location>
        <position position="177"/>
    </location>
    <ligand>
        <name>substrate</name>
    </ligand>
</feature>
<feature type="binding site" description="via carbamate group" evidence="1">
    <location>
        <position position="201"/>
    </location>
    <ligand>
        <name>Mg(2+)</name>
        <dbReference type="ChEBI" id="CHEBI:18420"/>
    </ligand>
</feature>
<feature type="binding site" evidence="1">
    <location>
        <position position="203"/>
    </location>
    <ligand>
        <name>Mg(2+)</name>
        <dbReference type="ChEBI" id="CHEBI:18420"/>
    </ligand>
</feature>
<feature type="binding site" evidence="1">
    <location>
        <position position="204"/>
    </location>
    <ligand>
        <name>Mg(2+)</name>
        <dbReference type="ChEBI" id="CHEBI:18420"/>
    </ligand>
</feature>
<feature type="binding site" evidence="1">
    <location>
        <position position="295"/>
    </location>
    <ligand>
        <name>substrate</name>
    </ligand>
</feature>
<feature type="binding site" evidence="1">
    <location>
        <position position="327"/>
    </location>
    <ligand>
        <name>substrate</name>
    </ligand>
</feature>
<feature type="binding site" evidence="1">
    <location>
        <position position="379"/>
    </location>
    <ligand>
        <name>substrate</name>
    </ligand>
</feature>
<feature type="site" description="Transition state stabilizer" evidence="1">
    <location>
        <position position="334"/>
    </location>
</feature>
<feature type="modified residue" description="N-acetylproline" evidence="1">
    <location>
        <position position="3"/>
    </location>
</feature>
<feature type="modified residue" description="N6,N6,N6-trimethyllysine" evidence="1">
    <location>
        <position position="14"/>
    </location>
</feature>
<feature type="modified residue" description="N6-carboxylysine" evidence="1">
    <location>
        <position position="201"/>
    </location>
</feature>
<feature type="disulfide bond" description="Interchain; in linked form" evidence="1">
    <location>
        <position position="247"/>
    </location>
</feature>
<feature type="non-terminal residue">
    <location>
        <position position="473"/>
    </location>
</feature>
<gene>
    <name evidence="1" type="primary">rbcL</name>
</gene>
<comment type="function">
    <text evidence="1">RuBisCO catalyzes two reactions: the carboxylation of D-ribulose 1,5-bisphosphate, the primary event in carbon dioxide fixation, as well as the oxidative fragmentation of the pentose substrate in the photorespiration process. Both reactions occur simultaneously and in competition at the same active site.</text>
</comment>
<comment type="catalytic activity">
    <reaction evidence="1">
        <text>2 (2R)-3-phosphoglycerate + 2 H(+) = D-ribulose 1,5-bisphosphate + CO2 + H2O</text>
        <dbReference type="Rhea" id="RHEA:23124"/>
        <dbReference type="ChEBI" id="CHEBI:15377"/>
        <dbReference type="ChEBI" id="CHEBI:15378"/>
        <dbReference type="ChEBI" id="CHEBI:16526"/>
        <dbReference type="ChEBI" id="CHEBI:57870"/>
        <dbReference type="ChEBI" id="CHEBI:58272"/>
        <dbReference type="EC" id="4.1.1.39"/>
    </reaction>
</comment>
<comment type="catalytic activity">
    <reaction evidence="1">
        <text>D-ribulose 1,5-bisphosphate + O2 = 2-phosphoglycolate + (2R)-3-phosphoglycerate + 2 H(+)</text>
        <dbReference type="Rhea" id="RHEA:36631"/>
        <dbReference type="ChEBI" id="CHEBI:15378"/>
        <dbReference type="ChEBI" id="CHEBI:15379"/>
        <dbReference type="ChEBI" id="CHEBI:57870"/>
        <dbReference type="ChEBI" id="CHEBI:58033"/>
        <dbReference type="ChEBI" id="CHEBI:58272"/>
    </reaction>
</comment>
<comment type="cofactor">
    <cofactor evidence="1">
        <name>Mg(2+)</name>
        <dbReference type="ChEBI" id="CHEBI:18420"/>
    </cofactor>
    <text evidence="1">Binds 1 Mg(2+) ion per subunit.</text>
</comment>
<comment type="subunit">
    <text evidence="1">Heterohexadecamer of 8 large chains and 8 small chains; disulfide-linked. The disulfide link is formed within the large subunit homodimers.</text>
</comment>
<comment type="subcellular location">
    <subcellularLocation>
        <location>Plastid</location>
        <location>Chloroplast</location>
    </subcellularLocation>
</comment>
<comment type="PTM">
    <text evidence="1">The disulfide bond which can form in the large chain dimeric partners within the hexadecamer appears to be associated with oxidative stress and protein turnover.</text>
</comment>
<comment type="miscellaneous">
    <text evidence="1">The basic functional RuBisCO is composed of a large chain homodimer in a 'head-to-tail' conformation. In form I RuBisCO this homodimer is arranged in a barrel-like tetramer with the small subunits forming a tetrameric 'cap' on each end of the 'barrel'.</text>
</comment>
<comment type="similarity">
    <text evidence="1">Belongs to the RuBisCO large chain family. Type I subfamily.</text>
</comment>
<reference key="1">
    <citation type="journal article" date="1996" name="Bot. Acta">
        <title>Phylogenetic relationships between some members of the sub-family lamioideae inferred from nucleotide sequences of the root gene.</title>
        <authorList>
            <person name="Kaufmann M."/>
            <person name="Wink M."/>
        </authorList>
    </citation>
    <scope>NUCLEOTIDE SEQUENCE [GENOMIC DNA]</scope>
</reference>
<accession>Q33619</accession>
<sequence length="473" mass="52432">MSPQTETKASVGFKAGLKEYKLTYYTPQYETKDTDILAAFRVTPQPGVPPEEAGAAVAAESSTGTWTTVWTDGLTSLDRYKGRCYHIEPVPGEKDQYICYAAYPLDLFEEGSVTNMFTSIVGNVFGFKALRALRLEDLRIPVAYVKTFQGPPHGIQVERDKLNKYGRPLLGCTIKPKLGLSAKNYGRAVYECLRGGLDFTKDDENVNSQPFMRWRDRFLFCAEAIYKSQAETGEIKGHYLNATAGTCEEMIKRAIFARELGVPMLMHDYLTGGFTANTSLAHYCRDNGLLLHIHRAMHAVIDRQKNHGMHFRVLAKALRLSGGDHIHSGTVVGKLEGERDITLGFVDLLRDDFIEKDRSRGIYFTQDWVSLPGVIPVASGGIHVWHMPALTEIFGDDSVLQFGGGTLGHPWGNAPGAVANRVAVEACVKARNEGRDLAAEGNAIIREACKWSPELAAACEVWKEIKFEFPAMD</sequence>
<keyword id="KW-0007">Acetylation</keyword>
<keyword id="KW-0113">Calvin cycle</keyword>
<keyword id="KW-0120">Carbon dioxide fixation</keyword>
<keyword id="KW-0150">Chloroplast</keyword>
<keyword id="KW-1015">Disulfide bond</keyword>
<keyword id="KW-0456">Lyase</keyword>
<keyword id="KW-0460">Magnesium</keyword>
<keyword id="KW-0479">Metal-binding</keyword>
<keyword id="KW-0488">Methylation</keyword>
<keyword id="KW-0503">Monooxygenase</keyword>
<keyword id="KW-0560">Oxidoreductase</keyword>
<keyword id="KW-0601">Photorespiration</keyword>
<keyword id="KW-0602">Photosynthesis</keyword>
<keyword id="KW-0934">Plastid</keyword>
<evidence type="ECO:0000255" key="1">
    <source>
        <dbReference type="HAMAP-Rule" id="MF_01338"/>
    </source>
</evidence>
<proteinExistence type="inferred from homology"/>
<geneLocation type="chloroplast"/>
<name>RBL_MONDI</name>
<organism>
    <name type="scientific">Monarda didyma</name>
    <name type="common">Scarlet bee-balm</name>
    <name type="synonym">Oswego tea</name>
    <dbReference type="NCBI Taxonomy" id="39343"/>
    <lineage>
        <taxon>Eukaryota</taxon>
        <taxon>Viridiplantae</taxon>
        <taxon>Streptophyta</taxon>
        <taxon>Embryophyta</taxon>
        <taxon>Tracheophyta</taxon>
        <taxon>Spermatophyta</taxon>
        <taxon>Magnoliopsida</taxon>
        <taxon>eudicotyledons</taxon>
        <taxon>Gunneridae</taxon>
        <taxon>Pentapetalae</taxon>
        <taxon>asterids</taxon>
        <taxon>lamiids</taxon>
        <taxon>Lamiales</taxon>
        <taxon>Lamiaceae</taxon>
        <taxon>Nepetoideae</taxon>
        <taxon>Mentheae</taxon>
        <taxon>Monarda</taxon>
    </lineage>
</organism>
<protein>
    <recommendedName>
        <fullName evidence="1">Ribulose bisphosphate carboxylase large chain</fullName>
        <shortName evidence="1">RuBisCO large subunit</shortName>
        <ecNumber evidence="1">4.1.1.39</ecNumber>
    </recommendedName>
</protein>